<gene>
    <name type="primary">MSH3</name>
    <name type="ORF">Kpol_183p2</name>
</gene>
<organism>
    <name type="scientific">Vanderwaltozyma polyspora (strain ATCC 22028 / DSM 70294 / BCRC 21397 / CBS 2163 / NBRC 10782 / NRRL Y-8283 / UCD 57-17)</name>
    <name type="common">Kluyveromyces polysporus</name>
    <dbReference type="NCBI Taxonomy" id="436907"/>
    <lineage>
        <taxon>Eukaryota</taxon>
        <taxon>Fungi</taxon>
        <taxon>Dikarya</taxon>
        <taxon>Ascomycota</taxon>
        <taxon>Saccharomycotina</taxon>
        <taxon>Saccharomycetes</taxon>
        <taxon>Saccharomycetales</taxon>
        <taxon>Saccharomycetaceae</taxon>
        <taxon>Vanderwaltozyma</taxon>
    </lineage>
</organism>
<comment type="function">
    <text evidence="1">Component of the post-replicative DNA mismatch repair system (MMR). Heterodimerizes with MSH2 to form MutS beta, which binds to DNA mismatches thereby initiating DNA repair. MSH3 provides substrate-binding and substrate specificity to the complex. When bound, the MutS beta heterodimer bends the DNA helix and shields approximately 20 base pairs. Acts mainly to repair insertion-deletion loops (IDLs) from 2 to 13 nucleotides in size, but can also repair base-base and single insertion-deletion mismatches that occur during replication. After mismatch binding, forms a ternary complex with the MutL alpha heterodimer, which is thought to be responsible for directing the downstream MMR events, including strand discrimination, excision, and resynthesis. ATP binding and hydrolysis play a pivotal role in mismatch repair functions (By similarity).</text>
</comment>
<comment type="subunit">
    <text evidence="1">Heterodimer consisting of MSH2-MSH3 (MutS beta). Forms a ternary complex with MutL alpha (MLH1-PMS1) (By similarity).</text>
</comment>
<comment type="subcellular location">
    <subcellularLocation>
        <location evidence="1">Nucleus</location>
    </subcellularLocation>
</comment>
<comment type="similarity">
    <text evidence="4">Belongs to the DNA mismatch repair MutS family. MSH3 subfamily.</text>
</comment>
<sequence>MSKQPVISRFFKPIARKEVTSEKGVEKEKPVDLDEEKHNEPATTSRLMPKGFDAAAETVTDEVIEIEVEIEHESEPKIEIKNGTVTAENKSMDFAEKLNRIWNDKKRVISNNDNDDSDGENDTIVKKSKNNSNKLTPLDQQVKDLKLLHMDKILVIRVGYKYKCFAQDAEIVSKILHIMLIPGKLTIDESNPQDSNYRQFAYCSFPDIRLKVHLETLVHNNLKVAVVEQSETSAIKKNSNASSKNSVFERKISGVYTKATFGINSAFSSNRKNVLGQYNSIWIINFSEIDKINSSFFMISVNLNSGEIIYDTFECSTTSIENLETRIKYLNPIEVLTVSALPEKVKLRLHGSNSTILLKEKEDIDKEIMEEINKSTKGLNLSAELFELVPVLYKYLTEYNNEELLLISENYKPFASKKHMVLNAAAIESLGIFGEEGGKGSLFWLLDHTRTSFGSRKLREWILHPLLDKKEIEDRLDAVDCIIHEVSNIFFESLNKMLTNVPDLLRTINRIAYGTTSRKEIYYFLKQMKSFSDHFQLHSNYLNSQVVSNDGRIHKSSALLTNLLTEITSGLKEINIENILSMINVSSVMEKDTYKQVSEFFNLNYYDHAEEIIKIQGNINEVKNELAEELSSIRKILKRPHLNYKDEMDYLIEVRNTQTKGLPSDWIVVNRTKMISRYHTPTSRKLIEKLQYQKDILYQETQKEYFQFVKRIKNDYFALNKIINHIATYDCILALASTSQNMNYVRPVLTDESQFIDAKNARNPIIESLDINYVPNDVNLSHSAGKFLIITGPNMGGKSSYIRQVALLVILAQVGSYVPADFMKTSIFDKILTRIGAYDNLLKGQSTFKVELLEIQNIIKNKTENSLLLLDEVGRGTSTEDGKAISYSIVDYFINLPVCPLVLFTTHYPFLGSINSKILKSYYMDFVEQKKEGEDWPSIVFLYKLRSGITDSSFGLNVARLAQIDKDIINHAFSISEKIRQETETANTMNLPILLKHILSSNDLKPQQKIIEILNLQNDSQEL</sequence>
<proteinExistence type="inferred from homology"/>
<accession>A7TTQ1</accession>
<evidence type="ECO:0000250" key="1"/>
<evidence type="ECO:0000255" key="2"/>
<evidence type="ECO:0000256" key="3">
    <source>
        <dbReference type="SAM" id="MobiDB-lite"/>
    </source>
</evidence>
<evidence type="ECO:0000305" key="4"/>
<protein>
    <recommendedName>
        <fullName>DNA mismatch repair protein MSH3</fullName>
    </recommendedName>
    <alternativeName>
        <fullName>MutS protein homolog 3</fullName>
    </alternativeName>
</protein>
<reference key="1">
    <citation type="journal article" date="2007" name="Proc. Natl. Acad. Sci. U.S.A.">
        <title>Independent sorting-out of thousands of duplicated gene pairs in two yeast species descended from a whole-genome duplication.</title>
        <authorList>
            <person name="Scannell D.R."/>
            <person name="Frank A.C."/>
            <person name="Conant G.C."/>
            <person name="Byrne K.P."/>
            <person name="Woolfit M."/>
            <person name="Wolfe K.H."/>
        </authorList>
    </citation>
    <scope>NUCLEOTIDE SEQUENCE [LARGE SCALE GENOMIC DNA]</scope>
    <source>
        <strain>ATCC 22028 / DSM 70294 / BCRC 21397 / CBS 2163 / NBRC 10782 / NRRL Y-8283 / UCD 57-17</strain>
    </source>
</reference>
<dbReference type="EMBL" id="DS480605">
    <property type="protein sequence ID" value="EDO14357.1"/>
    <property type="molecule type" value="Genomic_DNA"/>
</dbReference>
<dbReference type="RefSeq" id="XP_001642215.1">
    <property type="nucleotide sequence ID" value="XM_001642165.1"/>
</dbReference>
<dbReference type="SMR" id="A7TTQ1"/>
<dbReference type="FunCoup" id="A7TTQ1">
    <property type="interactions" value="862"/>
</dbReference>
<dbReference type="STRING" id="436907.A7TTQ1"/>
<dbReference type="GeneID" id="5542335"/>
<dbReference type="KEGG" id="vpo:Kpol_183p2"/>
<dbReference type="eggNOG" id="KOG0218">
    <property type="taxonomic scope" value="Eukaryota"/>
</dbReference>
<dbReference type="HOGENOM" id="CLU_002472_0_0_1"/>
<dbReference type="InParanoid" id="A7TTQ1"/>
<dbReference type="OMA" id="INMHAAR"/>
<dbReference type="OrthoDB" id="121051at2759"/>
<dbReference type="PhylomeDB" id="A7TTQ1"/>
<dbReference type="Proteomes" id="UP000000267">
    <property type="component" value="Unassembled WGS sequence"/>
</dbReference>
<dbReference type="GO" id="GO:0032302">
    <property type="term" value="C:MutSbeta complex"/>
    <property type="evidence" value="ECO:0007669"/>
    <property type="project" value="EnsemblFungi"/>
</dbReference>
<dbReference type="GO" id="GO:0005524">
    <property type="term" value="F:ATP binding"/>
    <property type="evidence" value="ECO:0007669"/>
    <property type="project" value="UniProtKB-KW"/>
</dbReference>
<dbReference type="GO" id="GO:0140664">
    <property type="term" value="F:ATP-dependent DNA damage sensor activity"/>
    <property type="evidence" value="ECO:0007669"/>
    <property type="project" value="InterPro"/>
</dbReference>
<dbReference type="GO" id="GO:0000406">
    <property type="term" value="F:double-strand/single-strand DNA junction binding"/>
    <property type="evidence" value="ECO:0007669"/>
    <property type="project" value="EnsemblFungi"/>
</dbReference>
<dbReference type="GO" id="GO:0000404">
    <property type="term" value="F:heteroduplex DNA loop binding"/>
    <property type="evidence" value="ECO:0007669"/>
    <property type="project" value="EnsemblFungi"/>
</dbReference>
<dbReference type="GO" id="GO:0000403">
    <property type="term" value="F:Y-form DNA binding"/>
    <property type="evidence" value="ECO:0007669"/>
    <property type="project" value="EnsemblFungi"/>
</dbReference>
<dbReference type="GO" id="GO:0000710">
    <property type="term" value="P:meiotic mismatch repair"/>
    <property type="evidence" value="ECO:0007669"/>
    <property type="project" value="EnsemblFungi"/>
</dbReference>
<dbReference type="GO" id="GO:0006312">
    <property type="term" value="P:mitotic recombination"/>
    <property type="evidence" value="ECO:0007669"/>
    <property type="project" value="EnsemblFungi"/>
</dbReference>
<dbReference type="GO" id="GO:0000735">
    <property type="term" value="P:removal of nonhomologous ends"/>
    <property type="evidence" value="ECO:0007669"/>
    <property type="project" value="EnsemblFungi"/>
</dbReference>
<dbReference type="GO" id="GO:0043111">
    <property type="term" value="P:replication fork arrest"/>
    <property type="evidence" value="ECO:0007669"/>
    <property type="project" value="EnsemblFungi"/>
</dbReference>
<dbReference type="FunFam" id="3.40.50.300:FF:002852">
    <property type="entry name" value="Mismatch repair protein"/>
    <property type="match status" value="1"/>
</dbReference>
<dbReference type="Gene3D" id="1.10.1420.10">
    <property type="match status" value="2"/>
</dbReference>
<dbReference type="Gene3D" id="3.40.1170.10">
    <property type="entry name" value="DNA repair protein MutS, domain I"/>
    <property type="match status" value="1"/>
</dbReference>
<dbReference type="Gene3D" id="3.30.420.110">
    <property type="entry name" value="MutS, connector domain"/>
    <property type="match status" value="1"/>
</dbReference>
<dbReference type="Gene3D" id="3.40.50.300">
    <property type="entry name" value="P-loop containing nucleotide triphosphate hydrolases"/>
    <property type="match status" value="1"/>
</dbReference>
<dbReference type="InterPro" id="IPR007695">
    <property type="entry name" value="DNA_mismatch_repair_MutS-lik_N"/>
</dbReference>
<dbReference type="InterPro" id="IPR017261">
    <property type="entry name" value="DNA_mismatch_repair_MutS/MSH"/>
</dbReference>
<dbReference type="InterPro" id="IPR000432">
    <property type="entry name" value="DNA_mismatch_repair_MutS_C"/>
</dbReference>
<dbReference type="InterPro" id="IPR007861">
    <property type="entry name" value="DNA_mismatch_repair_MutS_clamp"/>
</dbReference>
<dbReference type="InterPro" id="IPR007696">
    <property type="entry name" value="DNA_mismatch_repair_MutS_core"/>
</dbReference>
<dbReference type="InterPro" id="IPR016151">
    <property type="entry name" value="DNA_mismatch_repair_MutS_N"/>
</dbReference>
<dbReference type="InterPro" id="IPR036187">
    <property type="entry name" value="DNA_mismatch_repair_MutS_sf"/>
</dbReference>
<dbReference type="InterPro" id="IPR045076">
    <property type="entry name" value="MutS"/>
</dbReference>
<dbReference type="InterPro" id="IPR036678">
    <property type="entry name" value="MutS_con_dom_sf"/>
</dbReference>
<dbReference type="InterPro" id="IPR027417">
    <property type="entry name" value="P-loop_NTPase"/>
</dbReference>
<dbReference type="PANTHER" id="PTHR11361:SF122">
    <property type="entry name" value="DNA MISMATCH REPAIR PROTEIN MSH3"/>
    <property type="match status" value="1"/>
</dbReference>
<dbReference type="PANTHER" id="PTHR11361">
    <property type="entry name" value="DNA MISMATCH REPAIR PROTEIN MUTS FAMILY MEMBER"/>
    <property type="match status" value="1"/>
</dbReference>
<dbReference type="Pfam" id="PF01624">
    <property type="entry name" value="MutS_I"/>
    <property type="match status" value="1"/>
</dbReference>
<dbReference type="Pfam" id="PF05192">
    <property type="entry name" value="MutS_III"/>
    <property type="match status" value="1"/>
</dbReference>
<dbReference type="Pfam" id="PF05190">
    <property type="entry name" value="MutS_IV"/>
    <property type="match status" value="1"/>
</dbReference>
<dbReference type="Pfam" id="PF00488">
    <property type="entry name" value="MutS_V"/>
    <property type="match status" value="1"/>
</dbReference>
<dbReference type="PIRSF" id="PIRSF037677">
    <property type="entry name" value="DNA_mis_repair_Msh6"/>
    <property type="match status" value="1"/>
</dbReference>
<dbReference type="SMART" id="SM00534">
    <property type="entry name" value="MUTSac"/>
    <property type="match status" value="1"/>
</dbReference>
<dbReference type="SMART" id="SM00533">
    <property type="entry name" value="MUTSd"/>
    <property type="match status" value="1"/>
</dbReference>
<dbReference type="SUPFAM" id="SSF55271">
    <property type="entry name" value="DNA repair protein MutS, domain I"/>
    <property type="match status" value="1"/>
</dbReference>
<dbReference type="SUPFAM" id="SSF48334">
    <property type="entry name" value="DNA repair protein MutS, domain III"/>
    <property type="match status" value="1"/>
</dbReference>
<dbReference type="SUPFAM" id="SSF52540">
    <property type="entry name" value="P-loop containing nucleoside triphosphate hydrolases"/>
    <property type="match status" value="1"/>
</dbReference>
<dbReference type="PROSITE" id="PS00486">
    <property type="entry name" value="DNA_MISMATCH_REPAIR_2"/>
    <property type="match status" value="1"/>
</dbReference>
<feature type="chain" id="PRO_0000338532" description="DNA mismatch repair protein MSH3">
    <location>
        <begin position="1"/>
        <end position="1023"/>
    </location>
</feature>
<feature type="region of interest" description="Disordered" evidence="3">
    <location>
        <begin position="19"/>
        <end position="46"/>
    </location>
</feature>
<feature type="region of interest" description="Disordered" evidence="3">
    <location>
        <begin position="108"/>
        <end position="135"/>
    </location>
</feature>
<feature type="region of interest" description="Mispair-binding domain" evidence="1">
    <location>
        <begin position="129"/>
        <end position="259"/>
    </location>
</feature>
<feature type="compositionally biased region" description="Basic and acidic residues" evidence="3">
    <location>
        <begin position="19"/>
        <end position="40"/>
    </location>
</feature>
<feature type="binding site" evidence="2">
    <location>
        <begin position="792"/>
        <end position="799"/>
    </location>
    <ligand>
        <name>ATP</name>
        <dbReference type="ChEBI" id="CHEBI:30616"/>
    </ligand>
</feature>
<keyword id="KW-0067">ATP-binding</keyword>
<keyword id="KW-0227">DNA damage</keyword>
<keyword id="KW-0234">DNA repair</keyword>
<keyword id="KW-0238">DNA-binding</keyword>
<keyword id="KW-0547">Nucleotide-binding</keyword>
<keyword id="KW-0539">Nucleus</keyword>
<keyword id="KW-1185">Reference proteome</keyword>
<name>MSH3_VANPO</name>